<reference key="1">
    <citation type="submission" date="2008-08" db="EMBL/GenBank/DDBJ databases">
        <title>The complete genome sequence of Thermodesulfovibrio yellowstonii strain ATCC 51303 / DSM 11347 / YP87.</title>
        <authorList>
            <person name="Dodson R.J."/>
            <person name="Durkin A.S."/>
            <person name="Wu M."/>
            <person name="Eisen J."/>
            <person name="Sutton G."/>
        </authorList>
    </citation>
    <scope>NUCLEOTIDE SEQUENCE [LARGE SCALE GENOMIC DNA]</scope>
    <source>
        <strain>ATCC 51303 / DSM 11347 / YP87</strain>
    </source>
</reference>
<dbReference type="EC" id="2.3.1.234" evidence="1"/>
<dbReference type="EMBL" id="CP001147">
    <property type="protein sequence ID" value="ACI21822.1"/>
    <property type="molecule type" value="Genomic_DNA"/>
</dbReference>
<dbReference type="RefSeq" id="WP_012546527.1">
    <property type="nucleotide sequence ID" value="NC_011296.1"/>
</dbReference>
<dbReference type="RefSeq" id="YP_002248889.1">
    <property type="nucleotide sequence ID" value="NC_011296.1"/>
</dbReference>
<dbReference type="SMR" id="B5YKX4"/>
<dbReference type="FunCoup" id="B5YKX4">
    <property type="interactions" value="431"/>
</dbReference>
<dbReference type="STRING" id="289376.THEYE_A1062"/>
<dbReference type="EnsemblBacteria" id="ACI21822">
    <property type="protein sequence ID" value="ACI21822"/>
    <property type="gene ID" value="THEYE_A1062"/>
</dbReference>
<dbReference type="KEGG" id="tye:THEYE_A1062"/>
<dbReference type="PATRIC" id="fig|289376.4.peg.1041"/>
<dbReference type="eggNOG" id="COG0533">
    <property type="taxonomic scope" value="Bacteria"/>
</dbReference>
<dbReference type="HOGENOM" id="CLU_023208_0_2_0"/>
<dbReference type="InParanoid" id="B5YKX4"/>
<dbReference type="OrthoDB" id="9806197at2"/>
<dbReference type="Proteomes" id="UP000000718">
    <property type="component" value="Chromosome"/>
</dbReference>
<dbReference type="GO" id="GO:0005737">
    <property type="term" value="C:cytoplasm"/>
    <property type="evidence" value="ECO:0007669"/>
    <property type="project" value="UniProtKB-SubCell"/>
</dbReference>
<dbReference type="GO" id="GO:0005506">
    <property type="term" value="F:iron ion binding"/>
    <property type="evidence" value="ECO:0007669"/>
    <property type="project" value="UniProtKB-UniRule"/>
</dbReference>
<dbReference type="GO" id="GO:0061711">
    <property type="term" value="F:N(6)-L-threonylcarbamoyladenine synthase activity"/>
    <property type="evidence" value="ECO:0007669"/>
    <property type="project" value="UniProtKB-EC"/>
</dbReference>
<dbReference type="GO" id="GO:0002949">
    <property type="term" value="P:tRNA threonylcarbamoyladenosine modification"/>
    <property type="evidence" value="ECO:0007669"/>
    <property type="project" value="UniProtKB-UniRule"/>
</dbReference>
<dbReference type="CDD" id="cd24133">
    <property type="entry name" value="ASKHA_NBD_TsaD_bac"/>
    <property type="match status" value="1"/>
</dbReference>
<dbReference type="FunFam" id="3.30.420.40:FF:000012">
    <property type="entry name" value="tRNA N6-adenosine threonylcarbamoyltransferase"/>
    <property type="match status" value="1"/>
</dbReference>
<dbReference type="FunFam" id="3.30.420.40:FF:000040">
    <property type="entry name" value="tRNA N6-adenosine threonylcarbamoyltransferase"/>
    <property type="match status" value="1"/>
</dbReference>
<dbReference type="Gene3D" id="3.30.420.40">
    <property type="match status" value="2"/>
</dbReference>
<dbReference type="HAMAP" id="MF_01445">
    <property type="entry name" value="TsaD"/>
    <property type="match status" value="1"/>
</dbReference>
<dbReference type="InterPro" id="IPR043129">
    <property type="entry name" value="ATPase_NBD"/>
</dbReference>
<dbReference type="InterPro" id="IPR000905">
    <property type="entry name" value="Gcp-like_dom"/>
</dbReference>
<dbReference type="InterPro" id="IPR017861">
    <property type="entry name" value="KAE1/TsaD"/>
</dbReference>
<dbReference type="InterPro" id="IPR022450">
    <property type="entry name" value="TsaD"/>
</dbReference>
<dbReference type="NCBIfam" id="TIGR00329">
    <property type="entry name" value="gcp_kae1"/>
    <property type="match status" value="1"/>
</dbReference>
<dbReference type="NCBIfam" id="TIGR03723">
    <property type="entry name" value="T6A_TsaD_YgjD"/>
    <property type="match status" value="1"/>
</dbReference>
<dbReference type="PANTHER" id="PTHR11735">
    <property type="entry name" value="TRNA N6-ADENOSINE THREONYLCARBAMOYLTRANSFERASE"/>
    <property type="match status" value="1"/>
</dbReference>
<dbReference type="PANTHER" id="PTHR11735:SF6">
    <property type="entry name" value="TRNA N6-ADENOSINE THREONYLCARBAMOYLTRANSFERASE, MITOCHONDRIAL"/>
    <property type="match status" value="1"/>
</dbReference>
<dbReference type="Pfam" id="PF00814">
    <property type="entry name" value="TsaD"/>
    <property type="match status" value="1"/>
</dbReference>
<dbReference type="PRINTS" id="PR00789">
    <property type="entry name" value="OSIALOPTASE"/>
</dbReference>
<dbReference type="SUPFAM" id="SSF53067">
    <property type="entry name" value="Actin-like ATPase domain"/>
    <property type="match status" value="2"/>
</dbReference>
<gene>
    <name evidence="1" type="primary">tsaD</name>
    <name type="synonym">gcp</name>
    <name type="ordered locus">THEYE_A1062</name>
</gene>
<evidence type="ECO:0000255" key="1">
    <source>
        <dbReference type="HAMAP-Rule" id="MF_01445"/>
    </source>
</evidence>
<comment type="function">
    <text evidence="1">Required for the formation of a threonylcarbamoyl group on adenosine at position 37 (t(6)A37) in tRNAs that read codons beginning with adenine. Is involved in the transfer of the threonylcarbamoyl moiety of threonylcarbamoyl-AMP (TC-AMP) to the N6 group of A37, together with TsaE and TsaB. TsaD likely plays a direct catalytic role in this reaction.</text>
</comment>
<comment type="catalytic activity">
    <reaction evidence="1">
        <text>L-threonylcarbamoyladenylate + adenosine(37) in tRNA = N(6)-L-threonylcarbamoyladenosine(37) in tRNA + AMP + H(+)</text>
        <dbReference type="Rhea" id="RHEA:37059"/>
        <dbReference type="Rhea" id="RHEA-COMP:10162"/>
        <dbReference type="Rhea" id="RHEA-COMP:10163"/>
        <dbReference type="ChEBI" id="CHEBI:15378"/>
        <dbReference type="ChEBI" id="CHEBI:73682"/>
        <dbReference type="ChEBI" id="CHEBI:74411"/>
        <dbReference type="ChEBI" id="CHEBI:74418"/>
        <dbReference type="ChEBI" id="CHEBI:456215"/>
        <dbReference type="EC" id="2.3.1.234"/>
    </reaction>
</comment>
<comment type="cofactor">
    <cofactor evidence="1">
        <name>Fe(2+)</name>
        <dbReference type="ChEBI" id="CHEBI:29033"/>
    </cofactor>
    <text evidence="1">Binds 1 Fe(2+) ion per subunit.</text>
</comment>
<comment type="subcellular location">
    <subcellularLocation>
        <location evidence="1">Cytoplasm</location>
    </subcellularLocation>
</comment>
<comment type="similarity">
    <text evidence="1">Belongs to the KAE1 / TsaD family.</text>
</comment>
<feature type="chain" id="PRO_1000146036" description="tRNA N6-adenosine threonylcarbamoyltransferase">
    <location>
        <begin position="1"/>
        <end position="333"/>
    </location>
</feature>
<feature type="binding site" evidence="1">
    <location>
        <position position="110"/>
    </location>
    <ligand>
        <name>Fe cation</name>
        <dbReference type="ChEBI" id="CHEBI:24875"/>
    </ligand>
</feature>
<feature type="binding site" evidence="1">
    <location>
        <position position="114"/>
    </location>
    <ligand>
        <name>Fe cation</name>
        <dbReference type="ChEBI" id="CHEBI:24875"/>
    </ligand>
</feature>
<feature type="binding site" evidence="1">
    <location>
        <begin position="133"/>
        <end position="137"/>
    </location>
    <ligand>
        <name>substrate</name>
    </ligand>
</feature>
<feature type="binding site" evidence="1">
    <location>
        <position position="166"/>
    </location>
    <ligand>
        <name>substrate</name>
    </ligand>
</feature>
<feature type="binding site" evidence="1">
    <location>
        <position position="179"/>
    </location>
    <ligand>
        <name>substrate</name>
    </ligand>
</feature>
<feature type="binding site" evidence="1">
    <location>
        <position position="183"/>
    </location>
    <ligand>
        <name>substrate</name>
    </ligand>
</feature>
<feature type="binding site" evidence="1">
    <location>
        <position position="275"/>
    </location>
    <ligand>
        <name>substrate</name>
    </ligand>
</feature>
<feature type="binding site" evidence="1">
    <location>
        <position position="302"/>
    </location>
    <ligand>
        <name>Fe cation</name>
        <dbReference type="ChEBI" id="CHEBI:24875"/>
    </ligand>
</feature>
<keyword id="KW-0012">Acyltransferase</keyword>
<keyword id="KW-0963">Cytoplasm</keyword>
<keyword id="KW-0408">Iron</keyword>
<keyword id="KW-0479">Metal-binding</keyword>
<keyword id="KW-1185">Reference proteome</keyword>
<keyword id="KW-0808">Transferase</keyword>
<keyword id="KW-0819">tRNA processing</keyword>
<protein>
    <recommendedName>
        <fullName evidence="1">tRNA N6-adenosine threonylcarbamoyltransferase</fullName>
        <ecNumber evidence="1">2.3.1.234</ecNumber>
    </recommendedName>
    <alternativeName>
        <fullName evidence="1">N6-L-threonylcarbamoyladenine synthase</fullName>
        <shortName evidence="1">t(6)A synthase</shortName>
    </alternativeName>
    <alternativeName>
        <fullName evidence="1">t(6)A37 threonylcarbamoyladenosine biosynthesis protein TsaD</fullName>
    </alternativeName>
    <alternativeName>
        <fullName evidence="1">tRNA threonylcarbamoyladenosine biosynthesis protein TsaD</fullName>
    </alternativeName>
</protein>
<accession>B5YKX4</accession>
<proteinExistence type="inferred from homology"/>
<name>TSAD_THEYD</name>
<organism>
    <name type="scientific">Thermodesulfovibrio yellowstonii (strain ATCC 51303 / DSM 11347 / YP87)</name>
    <dbReference type="NCBI Taxonomy" id="289376"/>
    <lineage>
        <taxon>Bacteria</taxon>
        <taxon>Pseudomonadati</taxon>
        <taxon>Nitrospirota</taxon>
        <taxon>Thermodesulfovibrionia</taxon>
        <taxon>Thermodesulfovibrionales</taxon>
        <taxon>Thermodesulfovibrionaceae</taxon>
        <taxon>Thermodesulfovibrio</taxon>
    </lineage>
</organism>
<sequence>MLILGIDTSCDDTSVAVLENRNILSNIVSSQIKFHSKYGGIVPEIASRKHIEWIWDVTEKALSEAKTDLKDIDLIAVCYGPGLIGSLLVGLCFAKSLSYASGKPLVGVNHIEGHIQAIFLEKSYPEYPFLCLIVSGGHTSLYRVNDFGAYKELGRTRDDAAGEAYDKVAKMLGLGYPGGPVIDALAKEGCNEKFNLPRPYLHGSLDFSFSGLKTAIKVLLKNLGYKEGNVPDEIKKDIAASFQTSVVDVLIEKIKWAISSEKLNRVVITGGVAANSELRRRAEMLKDKGINVYLPSKSLCTDNAAMIAITGYNKFLKGEISDLFLNARAYLPL</sequence>